<organism>
    <name type="scientific">Leuconostoc mesenteroides subsp. mesenteroides (strain ATCC 8293 / DSM 20343 / BCRC 11652 / CCM 1803 / JCM 6124 / NCDO 523 / NBRC 100496 / NCIMB 8023 / NCTC 12954 / NRRL B-1118 / 37Y)</name>
    <dbReference type="NCBI Taxonomy" id="203120"/>
    <lineage>
        <taxon>Bacteria</taxon>
        <taxon>Bacillati</taxon>
        <taxon>Bacillota</taxon>
        <taxon>Bacilli</taxon>
        <taxon>Lactobacillales</taxon>
        <taxon>Lactobacillaceae</taxon>
        <taxon>Leuconostoc</taxon>
    </lineage>
</organism>
<accession>Q03VT9</accession>
<name>COAD_LEUMM</name>
<reference key="1">
    <citation type="journal article" date="2006" name="Proc. Natl. Acad. Sci. U.S.A.">
        <title>Comparative genomics of the lactic acid bacteria.</title>
        <authorList>
            <person name="Makarova K.S."/>
            <person name="Slesarev A."/>
            <person name="Wolf Y.I."/>
            <person name="Sorokin A."/>
            <person name="Mirkin B."/>
            <person name="Koonin E.V."/>
            <person name="Pavlov A."/>
            <person name="Pavlova N."/>
            <person name="Karamychev V."/>
            <person name="Polouchine N."/>
            <person name="Shakhova V."/>
            <person name="Grigoriev I."/>
            <person name="Lou Y."/>
            <person name="Rohksar D."/>
            <person name="Lucas S."/>
            <person name="Huang K."/>
            <person name="Goodstein D.M."/>
            <person name="Hawkins T."/>
            <person name="Plengvidhya V."/>
            <person name="Welker D."/>
            <person name="Hughes J."/>
            <person name="Goh Y."/>
            <person name="Benson A."/>
            <person name="Baldwin K."/>
            <person name="Lee J.-H."/>
            <person name="Diaz-Muniz I."/>
            <person name="Dosti B."/>
            <person name="Smeianov V."/>
            <person name="Wechter W."/>
            <person name="Barabote R."/>
            <person name="Lorca G."/>
            <person name="Altermann E."/>
            <person name="Barrangou R."/>
            <person name="Ganesan B."/>
            <person name="Xie Y."/>
            <person name="Rawsthorne H."/>
            <person name="Tamir D."/>
            <person name="Parker C."/>
            <person name="Breidt F."/>
            <person name="Broadbent J.R."/>
            <person name="Hutkins R."/>
            <person name="O'Sullivan D."/>
            <person name="Steele J."/>
            <person name="Unlu G."/>
            <person name="Saier M.H. Jr."/>
            <person name="Klaenhammer T."/>
            <person name="Richardson P."/>
            <person name="Kozyavkin S."/>
            <person name="Weimer B.C."/>
            <person name="Mills D.A."/>
        </authorList>
    </citation>
    <scope>NUCLEOTIDE SEQUENCE [LARGE SCALE GENOMIC DNA]</scope>
    <source>
        <strain>ATCC 8293 / DSM 20343 / BCRC 11652 / CCM 1803 / JCM 6124 / NCDO 523 / NBRC 100496 / NCIMB 8023 / NCTC 12954 / NRRL B-1118 / 37Y</strain>
    </source>
</reference>
<comment type="function">
    <text evidence="1">Reversibly transfers an adenylyl group from ATP to 4'-phosphopantetheine, yielding dephospho-CoA (dPCoA) and pyrophosphate.</text>
</comment>
<comment type="catalytic activity">
    <reaction evidence="1">
        <text>(R)-4'-phosphopantetheine + ATP + H(+) = 3'-dephospho-CoA + diphosphate</text>
        <dbReference type="Rhea" id="RHEA:19801"/>
        <dbReference type="ChEBI" id="CHEBI:15378"/>
        <dbReference type="ChEBI" id="CHEBI:30616"/>
        <dbReference type="ChEBI" id="CHEBI:33019"/>
        <dbReference type="ChEBI" id="CHEBI:57328"/>
        <dbReference type="ChEBI" id="CHEBI:61723"/>
        <dbReference type="EC" id="2.7.7.3"/>
    </reaction>
</comment>
<comment type="cofactor">
    <cofactor evidence="1">
        <name>Mg(2+)</name>
        <dbReference type="ChEBI" id="CHEBI:18420"/>
    </cofactor>
</comment>
<comment type="pathway">
    <text evidence="1">Cofactor biosynthesis; coenzyme A biosynthesis; CoA from (R)-pantothenate: step 4/5.</text>
</comment>
<comment type="subunit">
    <text evidence="1">Homohexamer.</text>
</comment>
<comment type="subcellular location">
    <subcellularLocation>
        <location evidence="1">Cytoplasm</location>
    </subcellularLocation>
</comment>
<comment type="similarity">
    <text evidence="1">Belongs to the bacterial CoaD family.</text>
</comment>
<evidence type="ECO:0000255" key="1">
    <source>
        <dbReference type="HAMAP-Rule" id="MF_00151"/>
    </source>
</evidence>
<sequence length="162" mass="17613">MSIAVFPGSFDPLTNGHLDIIKRASGIFEKVIVGVGNNTSKAALFTPQEKMTLISTVVKDLPNVEVAIMKGLTVQFMNEVGAKYIVRGLRNGKDFEYERDIAGMNSALADVETVLLLAKPKNQNISSSMVKEIGSMGADNMVKFVPKAIVEALKERLNAQKK</sequence>
<feature type="chain" id="PRO_1000011171" description="Phosphopantetheine adenylyltransferase">
    <location>
        <begin position="1"/>
        <end position="162"/>
    </location>
</feature>
<feature type="binding site" evidence="1">
    <location>
        <begin position="9"/>
        <end position="10"/>
    </location>
    <ligand>
        <name>ATP</name>
        <dbReference type="ChEBI" id="CHEBI:30616"/>
    </ligand>
</feature>
<feature type="binding site" evidence="1">
    <location>
        <position position="9"/>
    </location>
    <ligand>
        <name>substrate</name>
    </ligand>
</feature>
<feature type="binding site" evidence="1">
    <location>
        <position position="17"/>
    </location>
    <ligand>
        <name>ATP</name>
        <dbReference type="ChEBI" id="CHEBI:30616"/>
    </ligand>
</feature>
<feature type="binding site" evidence="1">
    <location>
        <position position="41"/>
    </location>
    <ligand>
        <name>substrate</name>
    </ligand>
</feature>
<feature type="binding site" evidence="1">
    <location>
        <position position="73"/>
    </location>
    <ligand>
        <name>substrate</name>
    </ligand>
</feature>
<feature type="binding site" evidence="1">
    <location>
        <position position="87"/>
    </location>
    <ligand>
        <name>substrate</name>
    </ligand>
</feature>
<feature type="binding site" evidence="1">
    <location>
        <begin position="88"/>
        <end position="90"/>
    </location>
    <ligand>
        <name>ATP</name>
        <dbReference type="ChEBI" id="CHEBI:30616"/>
    </ligand>
</feature>
<feature type="binding site" evidence="1">
    <location>
        <position position="98"/>
    </location>
    <ligand>
        <name>ATP</name>
        <dbReference type="ChEBI" id="CHEBI:30616"/>
    </ligand>
</feature>
<feature type="binding site" evidence="1">
    <location>
        <begin position="122"/>
        <end position="128"/>
    </location>
    <ligand>
        <name>ATP</name>
        <dbReference type="ChEBI" id="CHEBI:30616"/>
    </ligand>
</feature>
<feature type="site" description="Transition state stabilizer" evidence="1">
    <location>
        <position position="17"/>
    </location>
</feature>
<dbReference type="EC" id="2.7.7.3" evidence="1"/>
<dbReference type="EMBL" id="CP000414">
    <property type="protein sequence ID" value="ABJ62683.1"/>
    <property type="molecule type" value="Genomic_DNA"/>
</dbReference>
<dbReference type="RefSeq" id="WP_010290182.1">
    <property type="nucleotide sequence ID" value="NC_008531.1"/>
</dbReference>
<dbReference type="SMR" id="Q03VT9"/>
<dbReference type="EnsemblBacteria" id="ABJ62683">
    <property type="protein sequence ID" value="ABJ62683"/>
    <property type="gene ID" value="LEUM_1591"/>
</dbReference>
<dbReference type="GeneID" id="29577147"/>
<dbReference type="KEGG" id="lme:LEUM_1591"/>
<dbReference type="eggNOG" id="COG0669">
    <property type="taxonomic scope" value="Bacteria"/>
</dbReference>
<dbReference type="HOGENOM" id="CLU_100149_1_1_9"/>
<dbReference type="UniPathway" id="UPA00241">
    <property type="reaction ID" value="UER00355"/>
</dbReference>
<dbReference type="Proteomes" id="UP000000362">
    <property type="component" value="Chromosome"/>
</dbReference>
<dbReference type="GO" id="GO:0005737">
    <property type="term" value="C:cytoplasm"/>
    <property type="evidence" value="ECO:0007669"/>
    <property type="project" value="UniProtKB-SubCell"/>
</dbReference>
<dbReference type="GO" id="GO:0005524">
    <property type="term" value="F:ATP binding"/>
    <property type="evidence" value="ECO:0007669"/>
    <property type="project" value="UniProtKB-KW"/>
</dbReference>
<dbReference type="GO" id="GO:0004595">
    <property type="term" value="F:pantetheine-phosphate adenylyltransferase activity"/>
    <property type="evidence" value="ECO:0007669"/>
    <property type="project" value="UniProtKB-UniRule"/>
</dbReference>
<dbReference type="GO" id="GO:0015937">
    <property type="term" value="P:coenzyme A biosynthetic process"/>
    <property type="evidence" value="ECO:0007669"/>
    <property type="project" value="UniProtKB-UniRule"/>
</dbReference>
<dbReference type="CDD" id="cd02163">
    <property type="entry name" value="PPAT"/>
    <property type="match status" value="1"/>
</dbReference>
<dbReference type="Gene3D" id="3.40.50.620">
    <property type="entry name" value="HUPs"/>
    <property type="match status" value="1"/>
</dbReference>
<dbReference type="HAMAP" id="MF_00151">
    <property type="entry name" value="PPAT_bact"/>
    <property type="match status" value="1"/>
</dbReference>
<dbReference type="InterPro" id="IPR004821">
    <property type="entry name" value="Cyt_trans-like"/>
</dbReference>
<dbReference type="InterPro" id="IPR001980">
    <property type="entry name" value="PPAT"/>
</dbReference>
<dbReference type="InterPro" id="IPR014729">
    <property type="entry name" value="Rossmann-like_a/b/a_fold"/>
</dbReference>
<dbReference type="NCBIfam" id="TIGR01510">
    <property type="entry name" value="coaD_prev_kdtB"/>
    <property type="match status" value="1"/>
</dbReference>
<dbReference type="NCBIfam" id="TIGR00125">
    <property type="entry name" value="cyt_tran_rel"/>
    <property type="match status" value="1"/>
</dbReference>
<dbReference type="PANTHER" id="PTHR21342">
    <property type="entry name" value="PHOSPHOPANTETHEINE ADENYLYLTRANSFERASE"/>
    <property type="match status" value="1"/>
</dbReference>
<dbReference type="PANTHER" id="PTHR21342:SF1">
    <property type="entry name" value="PHOSPHOPANTETHEINE ADENYLYLTRANSFERASE"/>
    <property type="match status" value="1"/>
</dbReference>
<dbReference type="Pfam" id="PF01467">
    <property type="entry name" value="CTP_transf_like"/>
    <property type="match status" value="1"/>
</dbReference>
<dbReference type="PRINTS" id="PR01020">
    <property type="entry name" value="LPSBIOSNTHSS"/>
</dbReference>
<dbReference type="SUPFAM" id="SSF52374">
    <property type="entry name" value="Nucleotidylyl transferase"/>
    <property type="match status" value="1"/>
</dbReference>
<proteinExistence type="inferred from homology"/>
<gene>
    <name evidence="1" type="primary">coaD</name>
    <name type="ordered locus">LEUM_1591</name>
</gene>
<protein>
    <recommendedName>
        <fullName evidence="1">Phosphopantetheine adenylyltransferase</fullName>
        <ecNumber evidence="1">2.7.7.3</ecNumber>
    </recommendedName>
    <alternativeName>
        <fullName evidence="1">Dephospho-CoA pyrophosphorylase</fullName>
    </alternativeName>
    <alternativeName>
        <fullName evidence="1">Pantetheine-phosphate adenylyltransferase</fullName>
        <shortName evidence="1">PPAT</shortName>
    </alternativeName>
</protein>
<keyword id="KW-0067">ATP-binding</keyword>
<keyword id="KW-0173">Coenzyme A biosynthesis</keyword>
<keyword id="KW-0963">Cytoplasm</keyword>
<keyword id="KW-0460">Magnesium</keyword>
<keyword id="KW-0547">Nucleotide-binding</keyword>
<keyword id="KW-0548">Nucleotidyltransferase</keyword>
<keyword id="KW-1185">Reference proteome</keyword>
<keyword id="KW-0808">Transferase</keyword>